<protein>
    <recommendedName>
        <fullName>Anaphase-promoting complex subunit 15A</fullName>
    </recommendedName>
</protein>
<accession>Q6IRQ9</accession>
<name>AP15A_XENLA</name>
<sequence>MSTLFPSLFPQVTDSLWFNLDRPCVDENELQQQEQQHQAWLLSIAEKDTGLVPIGKPASEPYDEEEEEDDEDDEDSEEDSEDDEDMQDMDEMNDYNESPDDGEIEADMEGAEQDQDQWMI</sequence>
<proteinExistence type="evidence at transcript level"/>
<reference key="1">
    <citation type="submission" date="2004-05" db="EMBL/GenBank/DDBJ databases">
        <authorList>
            <consortium name="NIH - Xenopus Gene Collection (XGC) project"/>
        </authorList>
    </citation>
    <scope>NUCLEOTIDE SEQUENCE [LARGE SCALE MRNA]</scope>
    <source>
        <tissue>Embryo</tissue>
    </source>
</reference>
<evidence type="ECO:0000250" key="1">
    <source>
        <dbReference type="UniProtKB" id="P60006"/>
    </source>
</evidence>
<evidence type="ECO:0000256" key="2">
    <source>
        <dbReference type="SAM" id="MobiDB-lite"/>
    </source>
</evidence>
<evidence type="ECO:0000305" key="3"/>
<gene>
    <name type="primary">anapc15-a</name>
</gene>
<organism>
    <name type="scientific">Xenopus laevis</name>
    <name type="common">African clawed frog</name>
    <dbReference type="NCBI Taxonomy" id="8355"/>
    <lineage>
        <taxon>Eukaryota</taxon>
        <taxon>Metazoa</taxon>
        <taxon>Chordata</taxon>
        <taxon>Craniata</taxon>
        <taxon>Vertebrata</taxon>
        <taxon>Euteleostomi</taxon>
        <taxon>Amphibia</taxon>
        <taxon>Batrachia</taxon>
        <taxon>Anura</taxon>
        <taxon>Pipoidea</taxon>
        <taxon>Pipidae</taxon>
        <taxon>Xenopodinae</taxon>
        <taxon>Xenopus</taxon>
        <taxon>Xenopus</taxon>
    </lineage>
</organism>
<dbReference type="EMBL" id="BC070624">
    <property type="protein sequence ID" value="AAH70624.1"/>
    <property type="molecule type" value="mRNA"/>
</dbReference>
<dbReference type="RefSeq" id="NP_001084966.1">
    <property type="nucleotide sequence ID" value="NM_001091497.1"/>
</dbReference>
<dbReference type="SMR" id="Q6IRQ9"/>
<dbReference type="DNASU" id="432025"/>
<dbReference type="GeneID" id="432025"/>
<dbReference type="KEGG" id="xla:432025"/>
<dbReference type="AGR" id="Xenbase:XB-GENE-17341991"/>
<dbReference type="CTD" id="432025"/>
<dbReference type="OMA" id="EGTDQDQ"/>
<dbReference type="OrthoDB" id="6362917at2759"/>
<dbReference type="UniPathway" id="UPA00143"/>
<dbReference type="Proteomes" id="UP000186698">
    <property type="component" value="Chromosome 6S"/>
</dbReference>
<dbReference type="Bgee" id="432025">
    <property type="expression patterns" value="Expressed in egg cell and 19 other cell types or tissues"/>
</dbReference>
<dbReference type="GO" id="GO:0005680">
    <property type="term" value="C:anaphase-promoting complex"/>
    <property type="evidence" value="ECO:0000250"/>
    <property type="project" value="UniProtKB"/>
</dbReference>
<dbReference type="GO" id="GO:0031145">
    <property type="term" value="P:anaphase-promoting complex-dependent catabolic process"/>
    <property type="evidence" value="ECO:0000250"/>
    <property type="project" value="UniProtKB"/>
</dbReference>
<dbReference type="GO" id="GO:0051301">
    <property type="term" value="P:cell division"/>
    <property type="evidence" value="ECO:0007669"/>
    <property type="project" value="UniProtKB-KW"/>
</dbReference>
<dbReference type="GO" id="GO:0141198">
    <property type="term" value="P:protein branched polyubiquitination"/>
    <property type="evidence" value="ECO:0000250"/>
    <property type="project" value="UniProtKB"/>
</dbReference>
<dbReference type="GO" id="GO:0070979">
    <property type="term" value="P:protein K11-linked ubiquitination"/>
    <property type="evidence" value="ECO:0000250"/>
    <property type="project" value="UniProtKB"/>
</dbReference>
<dbReference type="GO" id="GO:0070936">
    <property type="term" value="P:protein K48-linked ubiquitination"/>
    <property type="evidence" value="ECO:0000250"/>
    <property type="project" value="UniProtKB"/>
</dbReference>
<dbReference type="GO" id="GO:0090266">
    <property type="term" value="P:regulation of mitotic cell cycle spindle assembly checkpoint"/>
    <property type="evidence" value="ECO:0000250"/>
    <property type="project" value="UniProtKB"/>
</dbReference>
<dbReference type="InterPro" id="IPR026182">
    <property type="entry name" value="ANAPC15"/>
</dbReference>
<dbReference type="PANTHER" id="PTHR22526">
    <property type="entry name" value="ANAPHASE PROMOTING COMPLEX C SUBUNIT 15, PSEUDOGENE-RELATED"/>
    <property type="match status" value="1"/>
</dbReference>
<dbReference type="PANTHER" id="PTHR22526:SF2">
    <property type="entry name" value="ANAPHASE PROMOTING COMPLEX C SUBUNIT 15, PSEUDOGENE-RELATED"/>
    <property type="match status" value="1"/>
</dbReference>
<dbReference type="Pfam" id="PF15243">
    <property type="entry name" value="ANAPC15"/>
    <property type="match status" value="1"/>
</dbReference>
<keyword id="KW-0131">Cell cycle</keyword>
<keyword id="KW-0132">Cell division</keyword>
<keyword id="KW-0498">Mitosis</keyword>
<keyword id="KW-1185">Reference proteome</keyword>
<feature type="chain" id="PRO_0000417540" description="Anaphase-promoting complex subunit 15A">
    <location>
        <begin position="1"/>
        <end position="120"/>
    </location>
</feature>
<feature type="region of interest" description="Disordered" evidence="2">
    <location>
        <begin position="47"/>
        <end position="120"/>
    </location>
</feature>
<feature type="compositionally biased region" description="Acidic residues" evidence="2">
    <location>
        <begin position="61"/>
        <end position="120"/>
    </location>
</feature>
<comment type="function">
    <text evidence="1">Component of the anaphase promoting complex/cyclosome (APC/C), a cell cycle-regulated E3 ubiquitin ligase that controls progression through mitosis and the G1 phase of the cell cycle. The APC/C complex catalyzes assembly of branched 'Lys-11'-/'Lys-48'-linked branched ubiquitin chains on target proteins.</text>
</comment>
<comment type="pathway">
    <text evidence="1">Protein modification; protein ubiquitination.</text>
</comment>
<comment type="subunit">
    <text evidence="1">The APC/C is composed of at least 12 subunits.</text>
</comment>
<comment type="similarity">
    <text evidence="3">Belongs to the APC15 family.</text>
</comment>